<evidence type="ECO:0000255" key="1">
    <source>
        <dbReference type="HAMAP-Rule" id="MF_00736"/>
    </source>
</evidence>
<evidence type="ECO:0000305" key="2"/>
<dbReference type="EMBL" id="AJ965256">
    <property type="protein sequence ID" value="CAI83083.1"/>
    <property type="molecule type" value="Genomic_DNA"/>
</dbReference>
<dbReference type="RefSeq" id="WP_011309434.1">
    <property type="nucleotide sequence ID" value="NC_007356.1"/>
</dbReference>
<dbReference type="SMR" id="Q3ZXX7"/>
<dbReference type="KEGG" id="deh:cbdbA957"/>
<dbReference type="HOGENOM" id="CLU_074237_2_1_0"/>
<dbReference type="Proteomes" id="UP000000433">
    <property type="component" value="Chromosome"/>
</dbReference>
<dbReference type="GO" id="GO:0022625">
    <property type="term" value="C:cytosolic large ribosomal subunit"/>
    <property type="evidence" value="ECO:0007669"/>
    <property type="project" value="TreeGrafter"/>
</dbReference>
<dbReference type="GO" id="GO:0070180">
    <property type="term" value="F:large ribosomal subunit rRNA binding"/>
    <property type="evidence" value="ECO:0007669"/>
    <property type="project" value="UniProtKB-UniRule"/>
</dbReference>
<dbReference type="GO" id="GO:0003735">
    <property type="term" value="F:structural constituent of ribosome"/>
    <property type="evidence" value="ECO:0007669"/>
    <property type="project" value="InterPro"/>
</dbReference>
<dbReference type="GO" id="GO:0006412">
    <property type="term" value="P:translation"/>
    <property type="evidence" value="ECO:0007669"/>
    <property type="project" value="UniProtKB-UniRule"/>
</dbReference>
<dbReference type="CDD" id="cd00349">
    <property type="entry name" value="Ribosomal_L11"/>
    <property type="match status" value="1"/>
</dbReference>
<dbReference type="FunFam" id="1.10.10.250:FF:000001">
    <property type="entry name" value="50S ribosomal protein L11"/>
    <property type="match status" value="1"/>
</dbReference>
<dbReference type="FunFam" id="3.30.1550.10:FF:000001">
    <property type="entry name" value="50S ribosomal protein L11"/>
    <property type="match status" value="1"/>
</dbReference>
<dbReference type="Gene3D" id="1.10.10.250">
    <property type="entry name" value="Ribosomal protein L11, C-terminal domain"/>
    <property type="match status" value="1"/>
</dbReference>
<dbReference type="Gene3D" id="3.30.1550.10">
    <property type="entry name" value="Ribosomal protein L11/L12, N-terminal domain"/>
    <property type="match status" value="1"/>
</dbReference>
<dbReference type="HAMAP" id="MF_00736">
    <property type="entry name" value="Ribosomal_uL11"/>
    <property type="match status" value="1"/>
</dbReference>
<dbReference type="InterPro" id="IPR000911">
    <property type="entry name" value="Ribosomal_uL11"/>
</dbReference>
<dbReference type="InterPro" id="IPR006519">
    <property type="entry name" value="Ribosomal_uL11_bac-typ"/>
</dbReference>
<dbReference type="InterPro" id="IPR020783">
    <property type="entry name" value="Ribosomal_uL11_C"/>
</dbReference>
<dbReference type="InterPro" id="IPR036769">
    <property type="entry name" value="Ribosomal_uL11_C_sf"/>
</dbReference>
<dbReference type="InterPro" id="IPR020785">
    <property type="entry name" value="Ribosomal_uL11_CS"/>
</dbReference>
<dbReference type="InterPro" id="IPR020784">
    <property type="entry name" value="Ribosomal_uL11_N"/>
</dbReference>
<dbReference type="InterPro" id="IPR036796">
    <property type="entry name" value="Ribosomal_uL11_N_sf"/>
</dbReference>
<dbReference type="NCBIfam" id="TIGR01632">
    <property type="entry name" value="L11_bact"/>
    <property type="match status" value="1"/>
</dbReference>
<dbReference type="PANTHER" id="PTHR11661">
    <property type="entry name" value="60S RIBOSOMAL PROTEIN L12"/>
    <property type="match status" value="1"/>
</dbReference>
<dbReference type="PANTHER" id="PTHR11661:SF1">
    <property type="entry name" value="LARGE RIBOSOMAL SUBUNIT PROTEIN UL11M"/>
    <property type="match status" value="1"/>
</dbReference>
<dbReference type="Pfam" id="PF00298">
    <property type="entry name" value="Ribosomal_L11"/>
    <property type="match status" value="1"/>
</dbReference>
<dbReference type="Pfam" id="PF03946">
    <property type="entry name" value="Ribosomal_L11_N"/>
    <property type="match status" value="1"/>
</dbReference>
<dbReference type="SMART" id="SM00649">
    <property type="entry name" value="RL11"/>
    <property type="match status" value="1"/>
</dbReference>
<dbReference type="SUPFAM" id="SSF54747">
    <property type="entry name" value="Ribosomal L11/L12e N-terminal domain"/>
    <property type="match status" value="1"/>
</dbReference>
<dbReference type="SUPFAM" id="SSF46906">
    <property type="entry name" value="Ribosomal protein L11, C-terminal domain"/>
    <property type="match status" value="1"/>
</dbReference>
<dbReference type="PROSITE" id="PS00359">
    <property type="entry name" value="RIBOSOMAL_L11"/>
    <property type="match status" value="1"/>
</dbReference>
<name>RL11_DEHMC</name>
<feature type="chain" id="PRO_0000258148" description="Large ribosomal subunit protein uL11">
    <location>
        <begin position="1"/>
        <end position="140"/>
    </location>
</feature>
<sequence length="140" mass="14690">MAKKVKAIVKLQIPAGKANPAPPIGPALGQHGINIMGFCKEYNERTASMVGTIVPAEITIYDDRSFTFITKTPPAADLLKKAAGVTSGSGTPSKSVVAVISKGQLREIASVKMKDLNAVNIEGAERIIEGTARSMGIKVE</sequence>
<accession>Q3ZXX7</accession>
<protein>
    <recommendedName>
        <fullName evidence="1">Large ribosomal subunit protein uL11</fullName>
    </recommendedName>
    <alternativeName>
        <fullName evidence="2">50S ribosomal protein L11</fullName>
    </alternativeName>
</protein>
<comment type="function">
    <text evidence="1">Forms part of the ribosomal stalk which helps the ribosome interact with GTP-bound translation factors.</text>
</comment>
<comment type="subunit">
    <text evidence="1">Part of the ribosomal stalk of the 50S ribosomal subunit. Interacts with L10 and the large rRNA to form the base of the stalk. L10 forms an elongated spine to which L12 dimers bind in a sequential fashion forming a multimeric L10(L12)X complex.</text>
</comment>
<comment type="PTM">
    <text evidence="1">One or more lysine residues are methylated.</text>
</comment>
<comment type="similarity">
    <text evidence="1">Belongs to the universal ribosomal protein uL11 family.</text>
</comment>
<gene>
    <name evidence="1" type="primary">rplK</name>
    <name type="ordered locus">cbdbA957</name>
</gene>
<proteinExistence type="inferred from homology"/>
<keyword id="KW-0488">Methylation</keyword>
<keyword id="KW-0687">Ribonucleoprotein</keyword>
<keyword id="KW-0689">Ribosomal protein</keyword>
<keyword id="KW-0694">RNA-binding</keyword>
<keyword id="KW-0699">rRNA-binding</keyword>
<organism>
    <name type="scientific">Dehalococcoides mccartyi (strain CBDB1)</name>
    <dbReference type="NCBI Taxonomy" id="255470"/>
    <lineage>
        <taxon>Bacteria</taxon>
        <taxon>Bacillati</taxon>
        <taxon>Chloroflexota</taxon>
        <taxon>Dehalococcoidia</taxon>
        <taxon>Dehalococcoidales</taxon>
        <taxon>Dehalococcoidaceae</taxon>
        <taxon>Dehalococcoides</taxon>
    </lineage>
</organism>
<reference key="1">
    <citation type="journal article" date="2005" name="Nat. Biotechnol.">
        <title>Genome sequence of the chlorinated compound-respiring bacterium Dehalococcoides species strain CBDB1.</title>
        <authorList>
            <person name="Kube M."/>
            <person name="Beck A."/>
            <person name="Zinder S.H."/>
            <person name="Kuhl H."/>
            <person name="Reinhardt R."/>
            <person name="Adrian L."/>
        </authorList>
    </citation>
    <scope>NUCLEOTIDE SEQUENCE [LARGE SCALE GENOMIC DNA]</scope>
    <source>
        <strain>CBDB1</strain>
    </source>
</reference>